<proteinExistence type="evidence at protein level"/>
<comment type="function">
    <text evidence="3">Alpha-1,3-xylosyltransferase, which elongates the O-linked xylose-glucose disaccharide attached to EGF-like repeats in the extracellular domain of target proteins by catalyzing the addition of the second xylose. Known targets include Notch proteins and coagulation factors, such as F9.</text>
</comment>
<comment type="catalytic activity">
    <reaction evidence="3">
        <text>3-O-[alpha-D-xylosyl-(1-&gt;3)-beta-D-glucosyl]-L-seryl-[EGF-like domain protein] + UDP-alpha-D-xylose = 3-O-[alpha-D-xylosyl-(1-&gt;3)-alpha-D-xylosyl-(1-&gt;3)-beta-D-glucosyl]-L-seryl-[EGF-like domain protein] + UDP + H(+)</text>
        <dbReference type="Rhea" id="RHEA:22820"/>
        <dbReference type="Rhea" id="RHEA-COMP:14611"/>
        <dbReference type="Rhea" id="RHEA-COMP:14619"/>
        <dbReference type="ChEBI" id="CHEBI:15378"/>
        <dbReference type="ChEBI" id="CHEBI:57632"/>
        <dbReference type="ChEBI" id="CHEBI:58223"/>
        <dbReference type="ChEBI" id="CHEBI:140575"/>
        <dbReference type="ChEBI" id="CHEBI:140599"/>
        <dbReference type="EC" id="2.4.2.62"/>
    </reaction>
</comment>
<comment type="cofactor">
    <cofactor evidence="1">
        <name>Mg(2+)</name>
        <dbReference type="ChEBI" id="CHEBI:18420"/>
    </cofactor>
    <cofactor evidence="5">
        <name>Mn(2+)</name>
        <dbReference type="ChEBI" id="CHEBI:29035"/>
    </cofactor>
    <text evidence="1">Has the highest in vitro activity with 20 mM Mn(2+), a concentration entirely out of the physiological range. Can also utilize Mg(2+), suggesting this may be the physiological cofactor.</text>
</comment>
<comment type="subunit">
    <text evidence="3 4">Homodimer (PubMed:26414444). Dimer formation may be essential for the retention in endoplasmic reticulum (Probable).</text>
</comment>
<comment type="interaction">
    <interactant intactId="EBI-16178491">
        <id>Q3U4G3</id>
    </interactant>
    <interactant intactId="EBI-9640450">
        <id>P00740</id>
        <label>F9</label>
    </interactant>
    <organismsDiffer>true</organismsDiffer>
    <experiments>3</experiments>
</comment>
<comment type="subcellular location">
    <subcellularLocation>
        <location evidence="1">Endoplasmic reticulum membrane</location>
        <topology evidence="1">Single-pass type II membrane protein</topology>
    </subcellularLocation>
</comment>
<comment type="similarity">
    <text evidence="4">Belongs to the glycosyltransferase 8 family.</text>
</comment>
<comment type="caution">
    <text evidence="4">It is uncertain whether Met-1 or Met-14 is the initiator.</text>
</comment>
<comment type="sequence caution" evidence="4">
    <conflict type="erroneous initiation">
        <sequence resource="EMBL-CDS" id="AAH31419"/>
    </conflict>
    <text>Truncated N-terminus.</text>
</comment>
<dbReference type="EC" id="2.4.2.62" evidence="3"/>
<dbReference type="EMBL" id="AK154256">
    <property type="protein sequence ID" value="BAE32468.1"/>
    <property type="molecule type" value="mRNA"/>
</dbReference>
<dbReference type="EMBL" id="AK166259">
    <property type="protein sequence ID" value="BAE38667.1"/>
    <property type="molecule type" value="mRNA"/>
</dbReference>
<dbReference type="EMBL" id="AC090430">
    <property type="status" value="NOT_ANNOTATED_CDS"/>
    <property type="molecule type" value="Genomic_DNA"/>
</dbReference>
<dbReference type="EMBL" id="AC126280">
    <property type="status" value="NOT_ANNOTATED_CDS"/>
    <property type="molecule type" value="Genomic_DNA"/>
</dbReference>
<dbReference type="EMBL" id="BC031419">
    <property type="protein sequence ID" value="AAH31419.1"/>
    <property type="status" value="ALT_INIT"/>
    <property type="molecule type" value="mRNA"/>
</dbReference>
<dbReference type="CCDS" id="CCDS49822.1"/>
<dbReference type="RefSeq" id="NP_941028.2">
    <property type="nucleotide sequence ID" value="NM_198626.3"/>
</dbReference>
<dbReference type="PDB" id="4WLG">
    <property type="method" value="X-ray"/>
    <property type="resolution" value="3.00 A"/>
    <property type="chains" value="A/B=87-392"/>
</dbReference>
<dbReference type="PDB" id="4WLM">
    <property type="method" value="X-ray"/>
    <property type="resolution" value="3.00 A"/>
    <property type="chains" value="A/B=87-392"/>
</dbReference>
<dbReference type="PDB" id="4WLZ">
    <property type="method" value="X-ray"/>
    <property type="resolution" value="3.03 A"/>
    <property type="chains" value="A/B=87-392"/>
</dbReference>
<dbReference type="PDB" id="4WM0">
    <property type="method" value="X-ray"/>
    <property type="resolution" value="2.37 A"/>
    <property type="chains" value="A=87-392"/>
</dbReference>
<dbReference type="PDB" id="4WMA">
    <property type="method" value="X-ray"/>
    <property type="resolution" value="1.62 A"/>
    <property type="chains" value="A=87-392"/>
</dbReference>
<dbReference type="PDB" id="4WMB">
    <property type="method" value="X-ray"/>
    <property type="resolution" value="2.05 A"/>
    <property type="chains" value="A=87-392"/>
</dbReference>
<dbReference type="PDB" id="4WMI">
    <property type="method" value="X-ray"/>
    <property type="resolution" value="1.87 A"/>
    <property type="chains" value="A=87-392"/>
</dbReference>
<dbReference type="PDB" id="4WMK">
    <property type="method" value="X-ray"/>
    <property type="resolution" value="2.08 A"/>
    <property type="chains" value="A=87-392"/>
</dbReference>
<dbReference type="PDB" id="4WN2">
    <property type="method" value="X-ray"/>
    <property type="resolution" value="1.95 A"/>
    <property type="chains" value="A=87-392"/>
</dbReference>
<dbReference type="PDB" id="4WNH">
    <property type="method" value="X-ray"/>
    <property type="resolution" value="1.95 A"/>
    <property type="chains" value="A=87-392"/>
</dbReference>
<dbReference type="PDBsum" id="4WLG"/>
<dbReference type="PDBsum" id="4WLM"/>
<dbReference type="PDBsum" id="4WLZ"/>
<dbReference type="PDBsum" id="4WM0"/>
<dbReference type="PDBsum" id="4WMA"/>
<dbReference type="PDBsum" id="4WMB"/>
<dbReference type="PDBsum" id="4WMI"/>
<dbReference type="PDBsum" id="4WMK"/>
<dbReference type="PDBsum" id="4WN2"/>
<dbReference type="PDBsum" id="4WNH"/>
<dbReference type="SMR" id="Q3U4G3"/>
<dbReference type="BioGRID" id="234571">
    <property type="interactions" value="3"/>
</dbReference>
<dbReference type="DIP" id="DIP-61862N"/>
<dbReference type="FunCoup" id="Q3U4G3">
    <property type="interactions" value="1043"/>
</dbReference>
<dbReference type="IntAct" id="Q3U4G3">
    <property type="interactions" value="1"/>
</dbReference>
<dbReference type="STRING" id="10090.ENSMUSP00000050246"/>
<dbReference type="CAZy" id="GT8">
    <property type="family name" value="Glycosyltransferase Family 8"/>
</dbReference>
<dbReference type="GlyGen" id="Q3U4G3">
    <property type="glycosylation" value="1 site"/>
</dbReference>
<dbReference type="iPTMnet" id="Q3U4G3"/>
<dbReference type="PhosphoSitePlus" id="Q3U4G3"/>
<dbReference type="SwissPalm" id="Q3U4G3"/>
<dbReference type="PaxDb" id="10090-ENSMUSP00000050246"/>
<dbReference type="PeptideAtlas" id="Q3U4G3"/>
<dbReference type="ProteomicsDB" id="300016"/>
<dbReference type="Pumba" id="Q3U4G3"/>
<dbReference type="Antibodypedia" id="53804">
    <property type="antibodies" value="47 antibodies from 11 providers"/>
</dbReference>
<dbReference type="DNASU" id="268880"/>
<dbReference type="Ensembl" id="ENSMUST00000055389.9">
    <property type="protein sequence ID" value="ENSMUSP00000050246.8"/>
    <property type="gene ID" value="ENSMUSG00000047434.15"/>
</dbReference>
<dbReference type="GeneID" id="268880"/>
<dbReference type="KEGG" id="mmu:268880"/>
<dbReference type="UCSC" id="uc007yxa.2">
    <property type="organism name" value="mouse"/>
</dbReference>
<dbReference type="AGR" id="MGI:2146443"/>
<dbReference type="CTD" id="152002"/>
<dbReference type="MGI" id="MGI:2146443">
    <property type="gene designation" value="Xxylt1"/>
</dbReference>
<dbReference type="VEuPathDB" id="HostDB:ENSMUSG00000047434"/>
<dbReference type="eggNOG" id="KOG3765">
    <property type="taxonomic scope" value="Eukaryota"/>
</dbReference>
<dbReference type="GeneTree" id="ENSGT00940000158154"/>
<dbReference type="HOGENOM" id="CLU_048175_0_0_1"/>
<dbReference type="InParanoid" id="Q3U4G3"/>
<dbReference type="OMA" id="NVWCIFT"/>
<dbReference type="OrthoDB" id="411524at2759"/>
<dbReference type="PhylomeDB" id="Q3U4G3"/>
<dbReference type="TreeFam" id="TF323210"/>
<dbReference type="BRENDA" id="2.4.2.62">
    <property type="organism ID" value="3474"/>
</dbReference>
<dbReference type="BioGRID-ORCS" id="268880">
    <property type="hits" value="1 hit in 78 CRISPR screens"/>
</dbReference>
<dbReference type="ChiTaRS" id="Xxylt1">
    <property type="organism name" value="mouse"/>
</dbReference>
<dbReference type="EvolutionaryTrace" id="Q3U4G3"/>
<dbReference type="PRO" id="PR:Q3U4G3"/>
<dbReference type="Proteomes" id="UP000000589">
    <property type="component" value="Chromosome 16"/>
</dbReference>
<dbReference type="RNAct" id="Q3U4G3">
    <property type="molecule type" value="protein"/>
</dbReference>
<dbReference type="Bgee" id="ENSMUSG00000047434">
    <property type="expression patterns" value="Expressed in embryonic post-anal tail and 143 other cell types or tissues"/>
</dbReference>
<dbReference type="GO" id="GO:0005789">
    <property type="term" value="C:endoplasmic reticulum membrane"/>
    <property type="evidence" value="ECO:0000250"/>
    <property type="project" value="UniProtKB"/>
</dbReference>
<dbReference type="GO" id="GO:0000287">
    <property type="term" value="F:magnesium ion binding"/>
    <property type="evidence" value="ECO:0000250"/>
    <property type="project" value="UniProtKB"/>
</dbReference>
<dbReference type="GO" id="GO:0030145">
    <property type="term" value="F:manganese ion binding"/>
    <property type="evidence" value="ECO:0000314"/>
    <property type="project" value="UniProtKB"/>
</dbReference>
<dbReference type="GO" id="GO:0035252">
    <property type="term" value="F:UDP-xylosyltransferase activity"/>
    <property type="evidence" value="ECO:0000314"/>
    <property type="project" value="UniProtKB"/>
</dbReference>
<dbReference type="GO" id="GO:0140560">
    <property type="term" value="F:xylosyl alpha-1,3-xylosyltransferase activity"/>
    <property type="evidence" value="ECO:0000250"/>
    <property type="project" value="UniProtKB"/>
</dbReference>
<dbReference type="GO" id="GO:0016266">
    <property type="term" value="P:O-glycan processing"/>
    <property type="evidence" value="ECO:0000314"/>
    <property type="project" value="UniProtKB"/>
</dbReference>
<dbReference type="FunFam" id="3.90.550.10:FF:000098">
    <property type="entry name" value="xyloside xylosyltransferase 1"/>
    <property type="match status" value="1"/>
</dbReference>
<dbReference type="Gene3D" id="3.90.550.10">
    <property type="entry name" value="Spore Coat Polysaccharide Biosynthesis Protein SpsA, Chain A"/>
    <property type="match status" value="1"/>
</dbReference>
<dbReference type="InterPro" id="IPR002495">
    <property type="entry name" value="Glyco_trans_8"/>
</dbReference>
<dbReference type="InterPro" id="IPR029044">
    <property type="entry name" value="Nucleotide-diphossugar_trans"/>
</dbReference>
<dbReference type="InterPro" id="IPR042465">
    <property type="entry name" value="XXLT1"/>
</dbReference>
<dbReference type="PANTHER" id="PTHR46612">
    <property type="entry name" value="XYLOSIDE XYLOSYLTRANSFERASE 1"/>
    <property type="match status" value="1"/>
</dbReference>
<dbReference type="PANTHER" id="PTHR46612:SF1">
    <property type="entry name" value="XYLOSIDE XYLOSYLTRANSFERASE 1"/>
    <property type="match status" value="1"/>
</dbReference>
<dbReference type="Pfam" id="PF01501">
    <property type="entry name" value="Glyco_transf_8"/>
    <property type="match status" value="1"/>
</dbReference>
<dbReference type="SUPFAM" id="SSF53448">
    <property type="entry name" value="Nucleotide-diphospho-sugar transferases"/>
    <property type="match status" value="1"/>
</dbReference>
<name>XXLT1_MOUSE</name>
<reference key="1">
    <citation type="journal article" date="2005" name="Science">
        <title>The transcriptional landscape of the mammalian genome.</title>
        <authorList>
            <person name="Carninci P."/>
            <person name="Kasukawa T."/>
            <person name="Katayama S."/>
            <person name="Gough J."/>
            <person name="Frith M.C."/>
            <person name="Maeda N."/>
            <person name="Oyama R."/>
            <person name="Ravasi T."/>
            <person name="Lenhard B."/>
            <person name="Wells C."/>
            <person name="Kodzius R."/>
            <person name="Shimokawa K."/>
            <person name="Bajic V.B."/>
            <person name="Brenner S.E."/>
            <person name="Batalov S."/>
            <person name="Forrest A.R."/>
            <person name="Zavolan M."/>
            <person name="Davis M.J."/>
            <person name="Wilming L.G."/>
            <person name="Aidinis V."/>
            <person name="Allen J.E."/>
            <person name="Ambesi-Impiombato A."/>
            <person name="Apweiler R."/>
            <person name="Aturaliya R.N."/>
            <person name="Bailey T.L."/>
            <person name="Bansal M."/>
            <person name="Baxter L."/>
            <person name="Beisel K.W."/>
            <person name="Bersano T."/>
            <person name="Bono H."/>
            <person name="Chalk A.M."/>
            <person name="Chiu K.P."/>
            <person name="Choudhary V."/>
            <person name="Christoffels A."/>
            <person name="Clutterbuck D.R."/>
            <person name="Crowe M.L."/>
            <person name="Dalla E."/>
            <person name="Dalrymple B.P."/>
            <person name="de Bono B."/>
            <person name="Della Gatta G."/>
            <person name="di Bernardo D."/>
            <person name="Down T."/>
            <person name="Engstrom P."/>
            <person name="Fagiolini M."/>
            <person name="Faulkner G."/>
            <person name="Fletcher C.F."/>
            <person name="Fukushima T."/>
            <person name="Furuno M."/>
            <person name="Futaki S."/>
            <person name="Gariboldi M."/>
            <person name="Georgii-Hemming P."/>
            <person name="Gingeras T.R."/>
            <person name="Gojobori T."/>
            <person name="Green R.E."/>
            <person name="Gustincich S."/>
            <person name="Harbers M."/>
            <person name="Hayashi Y."/>
            <person name="Hensch T.K."/>
            <person name="Hirokawa N."/>
            <person name="Hill D."/>
            <person name="Huminiecki L."/>
            <person name="Iacono M."/>
            <person name="Ikeo K."/>
            <person name="Iwama A."/>
            <person name="Ishikawa T."/>
            <person name="Jakt M."/>
            <person name="Kanapin A."/>
            <person name="Katoh M."/>
            <person name="Kawasawa Y."/>
            <person name="Kelso J."/>
            <person name="Kitamura H."/>
            <person name="Kitano H."/>
            <person name="Kollias G."/>
            <person name="Krishnan S.P."/>
            <person name="Kruger A."/>
            <person name="Kummerfeld S.K."/>
            <person name="Kurochkin I.V."/>
            <person name="Lareau L.F."/>
            <person name="Lazarevic D."/>
            <person name="Lipovich L."/>
            <person name="Liu J."/>
            <person name="Liuni S."/>
            <person name="McWilliam S."/>
            <person name="Madan Babu M."/>
            <person name="Madera M."/>
            <person name="Marchionni L."/>
            <person name="Matsuda H."/>
            <person name="Matsuzawa S."/>
            <person name="Miki H."/>
            <person name="Mignone F."/>
            <person name="Miyake S."/>
            <person name="Morris K."/>
            <person name="Mottagui-Tabar S."/>
            <person name="Mulder N."/>
            <person name="Nakano N."/>
            <person name="Nakauchi H."/>
            <person name="Ng P."/>
            <person name="Nilsson R."/>
            <person name="Nishiguchi S."/>
            <person name="Nishikawa S."/>
            <person name="Nori F."/>
            <person name="Ohara O."/>
            <person name="Okazaki Y."/>
            <person name="Orlando V."/>
            <person name="Pang K.C."/>
            <person name="Pavan W.J."/>
            <person name="Pavesi G."/>
            <person name="Pesole G."/>
            <person name="Petrovsky N."/>
            <person name="Piazza S."/>
            <person name="Reed J."/>
            <person name="Reid J.F."/>
            <person name="Ring B.Z."/>
            <person name="Ringwald M."/>
            <person name="Rost B."/>
            <person name="Ruan Y."/>
            <person name="Salzberg S.L."/>
            <person name="Sandelin A."/>
            <person name="Schneider C."/>
            <person name="Schoenbach C."/>
            <person name="Sekiguchi K."/>
            <person name="Semple C.A."/>
            <person name="Seno S."/>
            <person name="Sessa L."/>
            <person name="Sheng Y."/>
            <person name="Shibata Y."/>
            <person name="Shimada H."/>
            <person name="Shimada K."/>
            <person name="Silva D."/>
            <person name="Sinclair B."/>
            <person name="Sperling S."/>
            <person name="Stupka E."/>
            <person name="Sugiura K."/>
            <person name="Sultana R."/>
            <person name="Takenaka Y."/>
            <person name="Taki K."/>
            <person name="Tammoja K."/>
            <person name="Tan S.L."/>
            <person name="Tang S."/>
            <person name="Taylor M.S."/>
            <person name="Tegner J."/>
            <person name="Teichmann S.A."/>
            <person name="Ueda H.R."/>
            <person name="van Nimwegen E."/>
            <person name="Verardo R."/>
            <person name="Wei C.L."/>
            <person name="Yagi K."/>
            <person name="Yamanishi H."/>
            <person name="Zabarovsky E."/>
            <person name="Zhu S."/>
            <person name="Zimmer A."/>
            <person name="Hide W."/>
            <person name="Bult C."/>
            <person name="Grimmond S.M."/>
            <person name="Teasdale R.D."/>
            <person name="Liu E.T."/>
            <person name="Brusic V."/>
            <person name="Quackenbush J."/>
            <person name="Wahlestedt C."/>
            <person name="Mattick J.S."/>
            <person name="Hume D.A."/>
            <person name="Kai C."/>
            <person name="Sasaki D."/>
            <person name="Tomaru Y."/>
            <person name="Fukuda S."/>
            <person name="Kanamori-Katayama M."/>
            <person name="Suzuki M."/>
            <person name="Aoki J."/>
            <person name="Arakawa T."/>
            <person name="Iida J."/>
            <person name="Imamura K."/>
            <person name="Itoh M."/>
            <person name="Kato T."/>
            <person name="Kawaji H."/>
            <person name="Kawagashira N."/>
            <person name="Kawashima T."/>
            <person name="Kojima M."/>
            <person name="Kondo S."/>
            <person name="Konno H."/>
            <person name="Nakano K."/>
            <person name="Ninomiya N."/>
            <person name="Nishio T."/>
            <person name="Okada M."/>
            <person name="Plessy C."/>
            <person name="Shibata K."/>
            <person name="Shiraki T."/>
            <person name="Suzuki S."/>
            <person name="Tagami M."/>
            <person name="Waki K."/>
            <person name="Watahiki A."/>
            <person name="Okamura-Oho Y."/>
            <person name="Suzuki H."/>
            <person name="Kawai J."/>
            <person name="Hayashizaki Y."/>
        </authorList>
    </citation>
    <scope>NUCLEOTIDE SEQUENCE [LARGE SCALE MRNA]</scope>
    <source>
        <strain>NOD</strain>
        <tissue>Mammary gland</tissue>
    </source>
</reference>
<reference key="2">
    <citation type="journal article" date="2009" name="PLoS Biol.">
        <title>Lineage-specific biology revealed by a finished genome assembly of the mouse.</title>
        <authorList>
            <person name="Church D.M."/>
            <person name="Goodstadt L."/>
            <person name="Hillier L.W."/>
            <person name="Zody M.C."/>
            <person name="Goldstein S."/>
            <person name="She X."/>
            <person name="Bult C.J."/>
            <person name="Agarwala R."/>
            <person name="Cherry J.L."/>
            <person name="DiCuccio M."/>
            <person name="Hlavina W."/>
            <person name="Kapustin Y."/>
            <person name="Meric P."/>
            <person name="Maglott D."/>
            <person name="Birtle Z."/>
            <person name="Marques A.C."/>
            <person name="Graves T."/>
            <person name="Zhou S."/>
            <person name="Teague B."/>
            <person name="Potamousis K."/>
            <person name="Churas C."/>
            <person name="Place M."/>
            <person name="Herschleb J."/>
            <person name="Runnheim R."/>
            <person name="Forrest D."/>
            <person name="Amos-Landgraf J."/>
            <person name="Schwartz D.C."/>
            <person name="Cheng Z."/>
            <person name="Lindblad-Toh K."/>
            <person name="Eichler E.E."/>
            <person name="Ponting C.P."/>
        </authorList>
    </citation>
    <scope>NUCLEOTIDE SEQUENCE [LARGE SCALE GENOMIC DNA]</scope>
    <source>
        <strain>C57BL/6J</strain>
    </source>
</reference>
<reference key="3">
    <citation type="journal article" date="2004" name="Genome Res.">
        <title>The status, quality, and expansion of the NIH full-length cDNA project: the Mammalian Gene Collection (MGC).</title>
        <authorList>
            <consortium name="The MGC Project Team"/>
        </authorList>
    </citation>
    <scope>NUCLEOTIDE SEQUENCE [LARGE SCALE MRNA]</scope>
    <source>
        <strain>FVB/N</strain>
        <tissue>Mammary tumor</tissue>
    </source>
</reference>
<reference evidence="6 7 8 9 10 11 12 13 14" key="4">
    <citation type="journal article" date="2015" name="Nat. Chem. Biol.">
        <title>Notch-modifying xylosyltransferase structures support an SNi-like retaining mechanism.</title>
        <authorList>
            <person name="Yu H."/>
            <person name="Takeuchi M."/>
            <person name="LeBarron J."/>
            <person name="Kantharia J."/>
            <person name="London E."/>
            <person name="Bakker H."/>
            <person name="Haltiwanger R.S."/>
            <person name="Li H."/>
            <person name="Takeuchi H."/>
        </authorList>
    </citation>
    <scope>X-RAY CRYSTALLOGRAPHY (1.62 ANGSTROMS) OF 87-392 IN COMPLEXES WITH MANGANESE IONS; F9 AND SUBSTRATES</scope>
    <scope>CATALYTIC ACTIVITY</scope>
    <scope>FUNCTION</scope>
    <scope>COFACTOR</scope>
    <scope>DISULFIDE BONDS</scope>
    <scope>TOPOLOGY</scope>
    <scope>MUTAGENESIS OF ASP-225; GLU-255; GLN-257; HIS-262; TRP-265; GLN-266; SER-289; ASP-319; ARG-324; GLY-325; HIS-326; ASP-329; GLN-330; TRP-358; TRP-359 AND ASN-384</scope>
</reference>
<protein>
    <recommendedName>
        <fullName>Xyloside xylosyltransferase 1</fullName>
        <ecNumber evidence="3">2.4.2.62</ecNumber>
    </recommendedName>
    <alternativeName>
        <fullName>UDP-xylose:alpha-xyloside alpha-1,3-xylosyltransferase</fullName>
    </alternativeName>
</protein>
<accession>Q3U4G3</accession>
<accession>E9QL73</accession>
<accession>Q3TLX5</accession>
<accession>Q8K2I0</accession>
<organism>
    <name type="scientific">Mus musculus</name>
    <name type="common">Mouse</name>
    <dbReference type="NCBI Taxonomy" id="10090"/>
    <lineage>
        <taxon>Eukaryota</taxon>
        <taxon>Metazoa</taxon>
        <taxon>Chordata</taxon>
        <taxon>Craniata</taxon>
        <taxon>Vertebrata</taxon>
        <taxon>Euteleostomi</taxon>
        <taxon>Mammalia</taxon>
        <taxon>Eutheria</taxon>
        <taxon>Euarchontoglires</taxon>
        <taxon>Glires</taxon>
        <taxon>Rodentia</taxon>
        <taxon>Myomorpha</taxon>
        <taxon>Muroidea</taxon>
        <taxon>Muridae</taxon>
        <taxon>Murinae</taxon>
        <taxon>Mus</taxon>
        <taxon>Mus</taxon>
    </lineage>
</organism>
<feature type="chain" id="PRO_0000234428" description="Xyloside xylosyltransferase 1">
    <location>
        <begin position="1"/>
        <end position="392"/>
    </location>
</feature>
<feature type="topological domain" description="Cytoplasmic" evidence="5">
    <location>
        <begin position="1"/>
        <end position="19"/>
    </location>
</feature>
<feature type="transmembrane region" description="Helical; Signal-anchor for type II membrane protein" evidence="2">
    <location>
        <begin position="20"/>
        <end position="42"/>
    </location>
</feature>
<feature type="topological domain" description="Lumenal" evidence="5">
    <location>
        <begin position="43"/>
        <end position="392"/>
    </location>
</feature>
<feature type="region of interest" description="Interaction with target proteins" evidence="3">
    <location>
        <begin position="262"/>
        <end position="265"/>
    </location>
</feature>
<feature type="binding site" evidence="3 15">
    <location>
        <begin position="103"/>
        <end position="105"/>
    </location>
    <ligand>
        <name>UDP-alpha-D-xylose</name>
        <dbReference type="ChEBI" id="CHEBI:57632"/>
    </ligand>
</feature>
<feature type="binding site" evidence="3 7 8 10 11 12 13 14 15">
    <location>
        <position position="225"/>
    </location>
    <ligand>
        <name>Mn(2+)</name>
        <dbReference type="ChEBI" id="CHEBI:29035"/>
    </ligand>
</feature>
<feature type="binding site" evidence="3 15">
    <location>
        <position position="226"/>
    </location>
    <ligand>
        <name>UDP-alpha-D-xylose</name>
        <dbReference type="ChEBI" id="CHEBI:57632"/>
    </ligand>
</feature>
<feature type="binding site" evidence="3 7 8 10 11 12 13 14 15">
    <location>
        <position position="227"/>
    </location>
    <ligand>
        <name>Mn(2+)</name>
        <dbReference type="ChEBI" id="CHEBI:29035"/>
    </ligand>
</feature>
<feature type="binding site" evidence="3 15">
    <location>
        <position position="289"/>
    </location>
    <ligand>
        <name>UDP-alpha-D-xylose</name>
        <dbReference type="ChEBI" id="CHEBI:57632"/>
    </ligand>
</feature>
<feature type="binding site" evidence="3 15">
    <location>
        <position position="327"/>
    </location>
    <ligand>
        <name>UDP-alpha-D-xylose</name>
        <dbReference type="ChEBI" id="CHEBI:57632"/>
    </ligand>
</feature>
<feature type="binding site" evidence="3 9 15">
    <location>
        <position position="330"/>
    </location>
    <ligand>
        <name>a glycoprotein</name>
        <dbReference type="ChEBI" id="CHEBI:17089"/>
        <note>substrate</note>
    </ligand>
    <ligandPart>
        <name>3-O-[alpha-D-xylosyl-(1-&gt;3)-beta-D-glucosyl]-L-seryl residue</name>
        <dbReference type="ChEBI" id="CHEBI:140575"/>
    </ligandPart>
</feature>
<feature type="binding site" evidence="3 15">
    <location>
        <position position="330"/>
    </location>
    <ligand>
        <name>UDP-alpha-D-xylose</name>
        <dbReference type="ChEBI" id="CHEBI:57632"/>
    </ligand>
</feature>
<feature type="binding site" evidence="3 9 15">
    <location>
        <position position="359"/>
    </location>
    <ligand>
        <name>a glycoprotein</name>
        <dbReference type="ChEBI" id="CHEBI:17089"/>
        <note>substrate</note>
    </ligand>
    <ligandPart>
        <name>3-O-[alpha-D-xylosyl-(1-&gt;3)-beta-D-glucosyl]-L-seryl residue</name>
        <dbReference type="ChEBI" id="CHEBI:140575"/>
    </ligandPart>
</feature>
<feature type="binding site" evidence="3 7 8 10 11 12 13 14 15">
    <location>
        <position position="382"/>
    </location>
    <ligand>
        <name>Mn(2+)</name>
        <dbReference type="ChEBI" id="CHEBI:29035"/>
    </ligand>
</feature>
<feature type="binding site" evidence="3 9 15">
    <location>
        <position position="384"/>
    </location>
    <ligand>
        <name>a glycoprotein</name>
        <dbReference type="ChEBI" id="CHEBI:17089"/>
        <note>substrate</note>
    </ligand>
    <ligandPart>
        <name>3-O-[alpha-D-xylosyl-(1-&gt;3)-beta-D-glucosyl]-L-seryl residue</name>
        <dbReference type="ChEBI" id="CHEBI:140575"/>
    </ligandPart>
</feature>
<feature type="disulfide bond" evidence="6 7 8 9 10 11 12 13 14 15">
    <location>
        <begin position="349"/>
        <end position="374"/>
    </location>
</feature>
<feature type="disulfide bond" evidence="6 7 8 9 10 11 12 13 14 15">
    <location>
        <begin position="356"/>
        <end position="385"/>
    </location>
</feature>
<feature type="mutagenesis site" description="No effect on enzyme activity." evidence="3">
    <original>D</original>
    <variation>N</variation>
    <location>
        <position position="225"/>
    </location>
</feature>
<feature type="mutagenesis site" description="Abolishes enzyme activity." evidence="3">
    <original>E</original>
    <variation>A</variation>
    <location>
        <position position="255"/>
    </location>
</feature>
<feature type="mutagenesis site" description="Reduces enzyme activity." evidence="3">
    <original>Q</original>
    <variation>A</variation>
    <location>
        <position position="257"/>
    </location>
</feature>
<feature type="mutagenesis site" description="Reduces enzyme activity." evidence="3">
    <original>H</original>
    <variation>A</variation>
    <location>
        <position position="262"/>
    </location>
</feature>
<feature type="mutagenesis site" description="Slightly reduces enzyme activity." evidence="3">
    <original>W</original>
    <variation>A</variation>
    <location>
        <position position="265"/>
    </location>
</feature>
<feature type="mutagenesis site" description="No effect on enzyme activity." evidence="3">
    <original>Q</original>
    <variation>K</variation>
    <location>
        <position position="266"/>
    </location>
</feature>
<feature type="mutagenesis site" description="Slightly reduces enzyme activity." evidence="3">
    <original>S</original>
    <variation>A</variation>
    <location>
        <position position="289"/>
    </location>
</feature>
<feature type="mutagenesis site" description="No significant effect on enzyme activity." evidence="3">
    <original>D</original>
    <variation>N</variation>
    <location>
        <position position="319"/>
    </location>
</feature>
<feature type="mutagenesis site" description="Reduces enzyme activity." evidence="3">
    <original>R</original>
    <variation>S</variation>
    <location>
        <position position="324"/>
    </location>
</feature>
<feature type="mutagenesis site" description="Strongly reduces enzyme activity." evidence="3">
    <original>G</original>
    <variation>S</variation>
    <location>
        <position position="325"/>
    </location>
</feature>
<feature type="mutagenesis site" description="Abolishes enzyme activity." evidence="3">
    <original>H</original>
    <variation>A</variation>
    <location>
        <position position="326"/>
    </location>
</feature>
<feature type="mutagenesis site" description="Increases enzyme activity." evidence="3">
    <original>D</original>
    <variation>A</variation>
    <location>
        <position position="329"/>
    </location>
</feature>
<feature type="mutagenesis site" description="Abolishes enzyme activity." evidence="3">
    <original>Q</original>
    <variation>A</variation>
    <location>
        <position position="330"/>
    </location>
</feature>
<feature type="mutagenesis site" description="Abolishes enzyme activity." evidence="3">
    <original>W</original>
    <variation>A</variation>
    <location>
        <position position="358"/>
    </location>
</feature>
<feature type="mutagenesis site" description="Abolishes enzyme activity." evidence="3">
    <original>W</original>
    <variation>A</variation>
    <location>
        <position position="359"/>
    </location>
</feature>
<feature type="mutagenesis site" description="Abolishes enzyme activity." evidence="3">
    <original>N</original>
    <variation>A</variation>
    <location>
        <position position="384"/>
    </location>
</feature>
<feature type="sequence conflict" description="In Ref. 3; AAH31419." evidence="4" ref="3">
    <original>ET</original>
    <variation>LP</variation>
    <location>
        <begin position="46"/>
        <end position="47"/>
    </location>
</feature>
<feature type="sequence conflict" description="In Ref. 1; BAE32468 and 3; AAH31419." evidence="4" ref="1 3">
    <original>AS</original>
    <variation>GF</variation>
    <location>
        <begin position="80"/>
        <end position="81"/>
    </location>
</feature>
<feature type="sequence conflict" description="In Ref. 1; BAE38667." evidence="4" ref="1">
    <original>L</original>
    <variation>Q</variation>
    <location>
        <position position="100"/>
    </location>
</feature>
<feature type="sequence conflict" description="In Ref. 1; BAE38667." evidence="4" ref="1">
    <original>N</original>
    <variation>D</variation>
    <location>
        <position position="110"/>
    </location>
</feature>
<feature type="sequence conflict" description="In Ref. 1; BAE38667." evidence="4" ref="1">
    <original>S</original>
    <variation>A</variation>
    <location>
        <position position="312"/>
    </location>
</feature>
<feature type="strand" evidence="16">
    <location>
        <begin position="96"/>
        <end position="103"/>
    </location>
</feature>
<feature type="helix" evidence="16">
    <location>
        <begin position="111"/>
        <end position="127"/>
    </location>
</feature>
<feature type="strand" evidence="16">
    <location>
        <begin position="134"/>
        <end position="142"/>
    </location>
</feature>
<feature type="helix" evidence="16">
    <location>
        <begin position="144"/>
        <end position="155"/>
    </location>
</feature>
<feature type="strand" evidence="16">
    <location>
        <begin position="165"/>
        <end position="172"/>
    </location>
</feature>
<feature type="helix" evidence="16">
    <location>
        <begin position="173"/>
        <end position="191"/>
    </location>
</feature>
<feature type="strand" evidence="16">
    <location>
        <begin position="192"/>
        <end position="196"/>
    </location>
</feature>
<feature type="helix" evidence="16">
    <location>
        <begin position="199"/>
        <end position="202"/>
    </location>
</feature>
<feature type="helix" evidence="16">
    <location>
        <begin position="203"/>
        <end position="209"/>
    </location>
</feature>
<feature type="helix" evidence="16">
    <location>
        <begin position="210"/>
        <end position="213"/>
    </location>
</feature>
<feature type="strand" evidence="16">
    <location>
        <begin position="220"/>
        <end position="224"/>
    </location>
</feature>
<feature type="strand" evidence="16">
    <location>
        <begin position="226"/>
        <end position="230"/>
    </location>
</feature>
<feature type="helix" evidence="16">
    <location>
        <begin position="235"/>
        <end position="238"/>
    </location>
</feature>
<feature type="helix" evidence="16">
    <location>
        <begin position="239"/>
        <end position="243"/>
    </location>
</feature>
<feature type="strand" evidence="16">
    <location>
        <begin position="250"/>
        <end position="254"/>
    </location>
</feature>
<feature type="helix" evidence="16">
    <location>
        <begin position="259"/>
        <end position="263"/>
    </location>
</feature>
<feature type="helix" evidence="16">
    <location>
        <begin position="265"/>
        <end position="270"/>
    </location>
</feature>
<feature type="turn" evidence="16">
    <location>
        <begin position="280"/>
        <end position="282"/>
    </location>
</feature>
<feature type="strand" evidence="16">
    <location>
        <begin position="287"/>
        <end position="295"/>
    </location>
</feature>
<feature type="helix" evidence="16">
    <location>
        <begin position="296"/>
        <end position="301"/>
    </location>
</feature>
<feature type="helix" evidence="16">
    <location>
        <begin position="303"/>
        <end position="308"/>
    </location>
</feature>
<feature type="helix" evidence="16">
    <location>
        <begin position="311"/>
        <end position="321"/>
    </location>
</feature>
<feature type="helix" evidence="16">
    <location>
        <begin position="329"/>
        <end position="339"/>
    </location>
</feature>
<feature type="helix" evidence="16">
    <location>
        <begin position="341"/>
        <end position="343"/>
    </location>
</feature>
<feature type="strand" evidence="16">
    <location>
        <begin position="344"/>
        <end position="347"/>
    </location>
</feature>
<feature type="helix" evidence="16">
    <location>
        <begin position="349"/>
        <end position="351"/>
    </location>
</feature>
<feature type="strand" evidence="16">
    <location>
        <begin position="352"/>
        <end position="354"/>
    </location>
</feature>
<feature type="helix" evidence="16">
    <location>
        <begin position="358"/>
        <end position="362"/>
    </location>
</feature>
<feature type="turn" evidence="16">
    <location>
        <begin position="365"/>
        <end position="367"/>
    </location>
</feature>
<feature type="helix" evidence="16">
    <location>
        <begin position="368"/>
        <end position="372"/>
    </location>
</feature>
<feature type="strand" evidence="16">
    <location>
        <begin position="379"/>
        <end position="382"/>
    </location>
</feature>
<feature type="turn" evidence="16">
    <location>
        <begin position="384"/>
        <end position="386"/>
    </location>
</feature>
<evidence type="ECO:0000250" key="1">
    <source>
        <dbReference type="UniProtKB" id="Q8NBI6"/>
    </source>
</evidence>
<evidence type="ECO:0000255" key="2"/>
<evidence type="ECO:0000269" key="3">
    <source>
    </source>
</evidence>
<evidence type="ECO:0000305" key="4"/>
<evidence type="ECO:0000305" key="5">
    <source>
    </source>
</evidence>
<evidence type="ECO:0007744" key="6">
    <source>
        <dbReference type="PDB" id="4WLG"/>
    </source>
</evidence>
<evidence type="ECO:0007744" key="7">
    <source>
        <dbReference type="PDB" id="4WLM"/>
    </source>
</evidence>
<evidence type="ECO:0007744" key="8">
    <source>
        <dbReference type="PDB" id="4WLZ"/>
    </source>
</evidence>
<evidence type="ECO:0007744" key="9">
    <source>
        <dbReference type="PDB" id="4WM0"/>
    </source>
</evidence>
<evidence type="ECO:0007744" key="10">
    <source>
        <dbReference type="PDB" id="4WMA"/>
    </source>
</evidence>
<evidence type="ECO:0007744" key="11">
    <source>
        <dbReference type="PDB" id="4WMB"/>
    </source>
</evidence>
<evidence type="ECO:0007744" key="12">
    <source>
        <dbReference type="PDB" id="4WMI"/>
    </source>
</evidence>
<evidence type="ECO:0007744" key="13">
    <source>
        <dbReference type="PDB" id="4WMK"/>
    </source>
</evidence>
<evidence type="ECO:0007744" key="14">
    <source>
        <dbReference type="PDB" id="4WN2"/>
    </source>
</evidence>
<evidence type="ECO:0007744" key="15">
    <source>
        <dbReference type="PDB" id="4WNH"/>
    </source>
</evidence>
<evidence type="ECO:0007829" key="16">
    <source>
        <dbReference type="PDB" id="4WMA"/>
    </source>
</evidence>
<keyword id="KW-0002">3D-structure</keyword>
<keyword id="KW-1015">Disulfide bond</keyword>
<keyword id="KW-0256">Endoplasmic reticulum</keyword>
<keyword id="KW-0328">Glycosyltransferase</keyword>
<keyword id="KW-0460">Magnesium</keyword>
<keyword id="KW-0464">Manganese</keyword>
<keyword id="KW-0472">Membrane</keyword>
<keyword id="KW-0479">Metal-binding</keyword>
<keyword id="KW-1185">Reference proteome</keyword>
<keyword id="KW-0735">Signal-anchor</keyword>
<keyword id="KW-0808">Transferase</keyword>
<keyword id="KW-0812">Transmembrane</keyword>
<keyword id="KW-1133">Transmembrane helix</keyword>
<gene>
    <name type="primary">Xxylt1</name>
</gene>
<sequence length="392" mass="43839">MGLLRGGAACARAMARLGALRSHYCALLLAAALAVCAFYYLGSGRETFSSATKRLKEARAGAAAPTPPAPELARGSAAPASGAKAKSLEGGVVVPVDYHLLMMFTKAEHNAPLQAKARVALSSLLRLAKFEAHEVLNLHFVSEEASREVAKALLRELLPPAAGFKCKVIFHDVAVLTDKLFPVVEAMQKYFSAGSGTYYSDSIFFLSVAMHQIMPKEIPRIIQLDLDLKYKTNIRELFEEFDNFLPGAVIGIAREMQPVYRHTFWQFRHENPKTRVGDPPPEGLPGFNSGVMLLNLEAMRQSPLYSHLLEPSWVQQLADKYHFRGHLGDQDFFTMIGMEHPELFHVLDCTWNRQLCTWWRDHGYSDVFQAYFRCEGHVKIYHGNCNTPIPED</sequence>